<reference key="1">
    <citation type="journal article" date="2005" name="J. Bacteriol.">
        <title>Insights on evolution of virulence and resistance from the complete genome analysis of an early methicillin-resistant Staphylococcus aureus strain and a biofilm-producing methicillin-resistant Staphylococcus epidermidis strain.</title>
        <authorList>
            <person name="Gill S.R."/>
            <person name="Fouts D.E."/>
            <person name="Archer G.L."/>
            <person name="Mongodin E.F."/>
            <person name="DeBoy R.T."/>
            <person name="Ravel J."/>
            <person name="Paulsen I.T."/>
            <person name="Kolonay J.F."/>
            <person name="Brinkac L.M."/>
            <person name="Beanan M.J."/>
            <person name="Dodson R.J."/>
            <person name="Daugherty S.C."/>
            <person name="Madupu R."/>
            <person name="Angiuoli S.V."/>
            <person name="Durkin A.S."/>
            <person name="Haft D.H."/>
            <person name="Vamathevan J.J."/>
            <person name="Khouri H."/>
            <person name="Utterback T.R."/>
            <person name="Lee C."/>
            <person name="Dimitrov G."/>
            <person name="Jiang L."/>
            <person name="Qin H."/>
            <person name="Weidman J."/>
            <person name="Tran K."/>
            <person name="Kang K.H."/>
            <person name="Hance I.R."/>
            <person name="Nelson K.E."/>
            <person name="Fraser C.M."/>
        </authorList>
    </citation>
    <scope>NUCLEOTIDE SEQUENCE [LARGE SCALE GENOMIC DNA]</scope>
    <source>
        <strain>COL</strain>
    </source>
</reference>
<feature type="chain" id="PRO_0000386511" description="Putative lipid kinase SACOL0787">
    <location>
        <begin position="1"/>
        <end position="305"/>
    </location>
</feature>
<feature type="domain" description="DAGKc" evidence="2">
    <location>
        <begin position="3"/>
        <end position="139"/>
    </location>
</feature>
<feature type="active site" description="Proton acceptor" evidence="1">
    <location>
        <position position="281"/>
    </location>
</feature>
<feature type="binding site" evidence="2">
    <location>
        <position position="44"/>
    </location>
    <ligand>
        <name>ATP</name>
        <dbReference type="ChEBI" id="CHEBI:30616"/>
    </ligand>
</feature>
<feature type="binding site" evidence="2">
    <location>
        <begin position="74"/>
        <end position="80"/>
    </location>
    <ligand>
        <name>ATP</name>
        <dbReference type="ChEBI" id="CHEBI:30616"/>
    </ligand>
</feature>
<feature type="binding site" evidence="2">
    <location>
        <position position="101"/>
    </location>
    <ligand>
        <name>ATP</name>
        <dbReference type="ChEBI" id="CHEBI:30616"/>
    </ligand>
</feature>
<feature type="binding site" evidence="1">
    <location>
        <position position="220"/>
    </location>
    <ligand>
        <name>Mg(2+)</name>
        <dbReference type="ChEBI" id="CHEBI:18420"/>
    </ligand>
</feature>
<feature type="binding site" evidence="1">
    <location>
        <position position="223"/>
    </location>
    <ligand>
        <name>Mg(2+)</name>
        <dbReference type="ChEBI" id="CHEBI:18420"/>
    </ligand>
</feature>
<feature type="binding site" evidence="1">
    <location>
        <position position="225"/>
    </location>
    <ligand>
        <name>Mg(2+)</name>
        <dbReference type="ChEBI" id="CHEBI:18420"/>
    </ligand>
</feature>
<protein>
    <recommendedName>
        <fullName>Putative lipid kinase SACOL0787</fullName>
        <ecNumber>2.7.1.-</ecNumber>
    </recommendedName>
</protein>
<dbReference type="EC" id="2.7.1.-"/>
<dbReference type="EMBL" id="CP000046">
    <property type="protein sequence ID" value="AAW37843.1"/>
    <property type="molecule type" value="Genomic_DNA"/>
</dbReference>
<dbReference type="RefSeq" id="WP_000429014.1">
    <property type="nucleotide sequence ID" value="NZ_JBGOFO010000005.1"/>
</dbReference>
<dbReference type="SMR" id="Q5HHU6"/>
<dbReference type="KEGG" id="sac:SACOL0787"/>
<dbReference type="HOGENOM" id="CLU_045532_1_0_9"/>
<dbReference type="Proteomes" id="UP000000530">
    <property type="component" value="Chromosome"/>
</dbReference>
<dbReference type="GO" id="GO:0005886">
    <property type="term" value="C:plasma membrane"/>
    <property type="evidence" value="ECO:0007669"/>
    <property type="project" value="TreeGrafter"/>
</dbReference>
<dbReference type="GO" id="GO:0005524">
    <property type="term" value="F:ATP binding"/>
    <property type="evidence" value="ECO:0007669"/>
    <property type="project" value="UniProtKB-KW"/>
</dbReference>
<dbReference type="GO" id="GO:0004143">
    <property type="term" value="F:ATP-dependent diacylglycerol kinase activity"/>
    <property type="evidence" value="ECO:0007669"/>
    <property type="project" value="TreeGrafter"/>
</dbReference>
<dbReference type="GO" id="GO:0046872">
    <property type="term" value="F:metal ion binding"/>
    <property type="evidence" value="ECO:0007669"/>
    <property type="project" value="UniProtKB-KW"/>
</dbReference>
<dbReference type="GO" id="GO:0008654">
    <property type="term" value="P:phospholipid biosynthetic process"/>
    <property type="evidence" value="ECO:0007669"/>
    <property type="project" value="UniProtKB-KW"/>
</dbReference>
<dbReference type="Gene3D" id="2.60.200.40">
    <property type="match status" value="1"/>
</dbReference>
<dbReference type="Gene3D" id="3.40.50.10330">
    <property type="entry name" value="Probable inorganic polyphosphate/atp-NAD kinase, domain 1"/>
    <property type="match status" value="1"/>
</dbReference>
<dbReference type="InterPro" id="IPR017438">
    <property type="entry name" value="ATP-NAD_kinase_N"/>
</dbReference>
<dbReference type="InterPro" id="IPR005218">
    <property type="entry name" value="Diacylglycerol/lipid_kinase"/>
</dbReference>
<dbReference type="InterPro" id="IPR001206">
    <property type="entry name" value="Diacylglycerol_kinase_cat_dom"/>
</dbReference>
<dbReference type="InterPro" id="IPR050187">
    <property type="entry name" value="Lipid_Phosphate_FormReg"/>
</dbReference>
<dbReference type="InterPro" id="IPR016064">
    <property type="entry name" value="NAD/diacylglycerol_kinase_sf"/>
</dbReference>
<dbReference type="InterPro" id="IPR045540">
    <property type="entry name" value="YegS/DAGK_C"/>
</dbReference>
<dbReference type="NCBIfam" id="TIGR00147">
    <property type="entry name" value="YegS/Rv2252/BmrU family lipid kinase"/>
    <property type="match status" value="1"/>
</dbReference>
<dbReference type="PANTHER" id="PTHR12358:SF106">
    <property type="entry name" value="LIPID KINASE YEGS"/>
    <property type="match status" value="1"/>
</dbReference>
<dbReference type="PANTHER" id="PTHR12358">
    <property type="entry name" value="SPHINGOSINE KINASE"/>
    <property type="match status" value="1"/>
</dbReference>
<dbReference type="Pfam" id="PF00781">
    <property type="entry name" value="DAGK_cat"/>
    <property type="match status" value="1"/>
</dbReference>
<dbReference type="Pfam" id="PF19279">
    <property type="entry name" value="YegS_C"/>
    <property type="match status" value="1"/>
</dbReference>
<dbReference type="SMART" id="SM00046">
    <property type="entry name" value="DAGKc"/>
    <property type="match status" value="1"/>
</dbReference>
<dbReference type="SUPFAM" id="SSF111331">
    <property type="entry name" value="NAD kinase/diacylglycerol kinase-like"/>
    <property type="match status" value="1"/>
</dbReference>
<dbReference type="PROSITE" id="PS50146">
    <property type="entry name" value="DAGK"/>
    <property type="match status" value="1"/>
</dbReference>
<organism>
    <name type="scientific">Staphylococcus aureus (strain COL)</name>
    <dbReference type="NCBI Taxonomy" id="93062"/>
    <lineage>
        <taxon>Bacteria</taxon>
        <taxon>Bacillati</taxon>
        <taxon>Bacillota</taxon>
        <taxon>Bacilli</taxon>
        <taxon>Bacillales</taxon>
        <taxon>Staphylococcaceae</taxon>
        <taxon>Staphylococcus</taxon>
    </lineage>
</organism>
<proteinExistence type="inferred from homology"/>
<evidence type="ECO:0000250" key="1"/>
<evidence type="ECO:0000255" key="2">
    <source>
        <dbReference type="PROSITE-ProRule" id="PRU00783"/>
    </source>
</evidence>
<evidence type="ECO:0000305" key="3"/>
<sequence length="305" mass="33626">MENKYTHGVLFYHEHSGLKNINQGIGEVTTALSSICKHLSIQLSENEGDIIKYCQEIKTKNYAKDVDILFILGGDGTVNELINGVMTHDLQLPIGILPGGTFNDFTKTLNIAPNHKQASEQMISAQVGTYDVIKINNQYALNFVGLGLIVQNAENVQDGSKDIFGKLSYIGSTVKTLLNPTQFNYQLSIDDKTYSGETTMILTANGPFIGGSRIPLTDLSPQDGELNTFIFNEQSFSILNDIFKKRDSMNWNEITQGIEHIPGKKISLTTDPAMKVDIDGEISLETPIDIEVIPNAIQLLTVNDL</sequence>
<comment type="function">
    <text evidence="1">May catalyze the ATP-dependent phosphorylation of lipids other than diacylglycerol (DAG).</text>
</comment>
<comment type="cofactor">
    <cofactor evidence="1">
        <name>Mg(2+)</name>
        <dbReference type="ChEBI" id="CHEBI:18420"/>
    </cofactor>
    <text evidence="1">Binds 1 Mg(2+) ion per subunit. This ion appears to have a structural role and is required for catalytic activity.</text>
</comment>
<comment type="similarity">
    <text evidence="3">Belongs to the diacylglycerol/lipid kinase family.</text>
</comment>
<name>Y787_STAAC</name>
<keyword id="KW-0067">ATP-binding</keyword>
<keyword id="KW-0418">Kinase</keyword>
<keyword id="KW-0444">Lipid biosynthesis</keyword>
<keyword id="KW-0443">Lipid metabolism</keyword>
<keyword id="KW-0460">Magnesium</keyword>
<keyword id="KW-0479">Metal-binding</keyword>
<keyword id="KW-0547">Nucleotide-binding</keyword>
<keyword id="KW-0594">Phospholipid biosynthesis</keyword>
<keyword id="KW-1208">Phospholipid metabolism</keyword>
<keyword id="KW-0808">Transferase</keyword>
<gene>
    <name type="ordered locus">SACOL0787</name>
</gene>
<accession>Q5HHU6</accession>